<protein>
    <recommendedName>
        <fullName evidence="1">UPF0297 protein SAUSA300_1574</fullName>
    </recommendedName>
</protein>
<proteinExistence type="inferred from homology"/>
<comment type="similarity">
    <text evidence="1">Belongs to the UPF0297 family.</text>
</comment>
<name>Y1574_STAA3</name>
<accession>Q2FGA9</accession>
<evidence type="ECO:0000255" key="1">
    <source>
        <dbReference type="HAMAP-Rule" id="MF_01507"/>
    </source>
</evidence>
<dbReference type="EMBL" id="CP000255">
    <property type="protein sequence ID" value="ABD20996.1"/>
    <property type="molecule type" value="Genomic_DNA"/>
</dbReference>
<dbReference type="RefSeq" id="WP_000426912.1">
    <property type="nucleotide sequence ID" value="NZ_CP027476.1"/>
</dbReference>
<dbReference type="SMR" id="Q2FGA9"/>
<dbReference type="KEGG" id="saa:SAUSA300_1574"/>
<dbReference type="HOGENOM" id="CLU_162466_0_0_9"/>
<dbReference type="OMA" id="GYHPINQ"/>
<dbReference type="Proteomes" id="UP000001939">
    <property type="component" value="Chromosome"/>
</dbReference>
<dbReference type="HAMAP" id="MF_01507">
    <property type="entry name" value="UPF0297"/>
    <property type="match status" value="1"/>
</dbReference>
<dbReference type="InterPro" id="IPR009309">
    <property type="entry name" value="IreB"/>
</dbReference>
<dbReference type="NCBIfam" id="NF003997">
    <property type="entry name" value="PRK05473.1"/>
    <property type="match status" value="1"/>
</dbReference>
<dbReference type="PANTHER" id="PTHR40067">
    <property type="entry name" value="UPF0297 PROTEIN YRZL"/>
    <property type="match status" value="1"/>
</dbReference>
<dbReference type="PANTHER" id="PTHR40067:SF1">
    <property type="entry name" value="UPF0297 PROTEIN YRZL"/>
    <property type="match status" value="1"/>
</dbReference>
<dbReference type="Pfam" id="PF06135">
    <property type="entry name" value="IreB"/>
    <property type="match status" value="1"/>
</dbReference>
<dbReference type="PIRSF" id="PIRSF037258">
    <property type="entry name" value="DUF965_bac"/>
    <property type="match status" value="1"/>
</dbReference>
<feature type="chain" id="PRO_0000236644" description="UPF0297 protein SAUSA300_1574">
    <location>
        <begin position="1"/>
        <end position="86"/>
    </location>
</feature>
<organism>
    <name type="scientific">Staphylococcus aureus (strain USA300)</name>
    <dbReference type="NCBI Taxonomy" id="367830"/>
    <lineage>
        <taxon>Bacteria</taxon>
        <taxon>Bacillati</taxon>
        <taxon>Bacillota</taxon>
        <taxon>Bacilli</taxon>
        <taxon>Bacillales</taxon>
        <taxon>Staphylococcaceae</taxon>
        <taxon>Staphylococcus</taxon>
    </lineage>
</organism>
<gene>
    <name type="ordered locus">SAUSA300_1574</name>
</gene>
<sequence>MENFDKTMKFDYEELPTQDVRDVLNNVYRTLDERGYNAVNQIVGYLLSGDPAYIPRQNEARNQIRHIDRDVIMEELVSYYLKEQNK</sequence>
<reference key="1">
    <citation type="journal article" date="2006" name="Lancet">
        <title>Complete genome sequence of USA300, an epidemic clone of community-acquired meticillin-resistant Staphylococcus aureus.</title>
        <authorList>
            <person name="Diep B.A."/>
            <person name="Gill S.R."/>
            <person name="Chang R.F."/>
            <person name="Phan T.H."/>
            <person name="Chen J.H."/>
            <person name="Davidson M.G."/>
            <person name="Lin F."/>
            <person name="Lin J."/>
            <person name="Carleton H.A."/>
            <person name="Mongodin E.F."/>
            <person name="Sensabaugh G.F."/>
            <person name="Perdreau-Remington F."/>
        </authorList>
    </citation>
    <scope>NUCLEOTIDE SEQUENCE [LARGE SCALE GENOMIC DNA]</scope>
    <source>
        <strain>USA300</strain>
    </source>
</reference>